<reference key="1">
    <citation type="journal article" date="2007" name="J. Bacteriol.">
        <title>The complete genome sequence of the lactic acid bacterial paradigm Lactococcus lactis subsp. cremoris MG1363.</title>
        <authorList>
            <person name="Wegmann U."/>
            <person name="O'Connell-Motherway M."/>
            <person name="Zomer A."/>
            <person name="Buist G."/>
            <person name="Shearman C."/>
            <person name="Canchaya C."/>
            <person name="Ventura M."/>
            <person name="Goesmann A."/>
            <person name="Gasson M.J."/>
            <person name="Kuipers O.P."/>
            <person name="van Sinderen D."/>
            <person name="Kok J."/>
        </authorList>
    </citation>
    <scope>NUCLEOTIDE SEQUENCE [LARGE SCALE GENOMIC DNA]</scope>
    <source>
        <strain>MG1363</strain>
    </source>
</reference>
<dbReference type="EC" id="4.2.1.126" evidence="1"/>
<dbReference type="EMBL" id="AM406671">
    <property type="protein sequence ID" value="CAL98009.1"/>
    <property type="molecule type" value="Genomic_DNA"/>
</dbReference>
<dbReference type="RefSeq" id="WP_011835285.1">
    <property type="nucleotide sequence ID" value="NC_009004.1"/>
</dbReference>
<dbReference type="SMR" id="A2RL43"/>
<dbReference type="STRING" id="416870.llmg_1427"/>
<dbReference type="KEGG" id="llm:llmg_1427"/>
<dbReference type="eggNOG" id="COG2103">
    <property type="taxonomic scope" value="Bacteria"/>
</dbReference>
<dbReference type="HOGENOM" id="CLU_049049_1_1_9"/>
<dbReference type="OrthoDB" id="9813395at2"/>
<dbReference type="PhylomeDB" id="A2RL43"/>
<dbReference type="UniPathway" id="UPA00342"/>
<dbReference type="Proteomes" id="UP000000364">
    <property type="component" value="Chromosome"/>
</dbReference>
<dbReference type="GO" id="GO:0097367">
    <property type="term" value="F:carbohydrate derivative binding"/>
    <property type="evidence" value="ECO:0007669"/>
    <property type="project" value="InterPro"/>
</dbReference>
<dbReference type="GO" id="GO:0016835">
    <property type="term" value="F:carbon-oxygen lyase activity"/>
    <property type="evidence" value="ECO:0007669"/>
    <property type="project" value="UniProtKB-UniRule"/>
</dbReference>
<dbReference type="GO" id="GO:0016803">
    <property type="term" value="F:ether hydrolase activity"/>
    <property type="evidence" value="ECO:0007669"/>
    <property type="project" value="TreeGrafter"/>
</dbReference>
<dbReference type="GO" id="GO:0046348">
    <property type="term" value="P:amino sugar catabolic process"/>
    <property type="evidence" value="ECO:0007669"/>
    <property type="project" value="InterPro"/>
</dbReference>
<dbReference type="GO" id="GO:0097173">
    <property type="term" value="P:N-acetylmuramic acid catabolic process"/>
    <property type="evidence" value="ECO:0007669"/>
    <property type="project" value="UniProtKB-UniPathway"/>
</dbReference>
<dbReference type="GO" id="GO:0009254">
    <property type="term" value="P:peptidoglycan turnover"/>
    <property type="evidence" value="ECO:0007669"/>
    <property type="project" value="TreeGrafter"/>
</dbReference>
<dbReference type="CDD" id="cd05007">
    <property type="entry name" value="SIS_Etherase"/>
    <property type="match status" value="1"/>
</dbReference>
<dbReference type="FunFam" id="1.10.8.1080:FF:000001">
    <property type="entry name" value="N-acetylmuramic acid 6-phosphate etherase"/>
    <property type="match status" value="1"/>
</dbReference>
<dbReference type="FunFam" id="3.40.50.10490:FF:000014">
    <property type="entry name" value="N-acetylmuramic acid 6-phosphate etherase"/>
    <property type="match status" value="1"/>
</dbReference>
<dbReference type="Gene3D" id="1.10.8.1080">
    <property type="match status" value="1"/>
</dbReference>
<dbReference type="Gene3D" id="3.40.50.10490">
    <property type="entry name" value="Glucose-6-phosphate isomerase like protein, domain 1"/>
    <property type="match status" value="1"/>
</dbReference>
<dbReference type="HAMAP" id="MF_00068">
    <property type="entry name" value="MurQ"/>
    <property type="match status" value="1"/>
</dbReference>
<dbReference type="InterPro" id="IPR005488">
    <property type="entry name" value="Etherase_MurQ"/>
</dbReference>
<dbReference type="InterPro" id="IPR005486">
    <property type="entry name" value="Glucokinase_regulatory_CS"/>
</dbReference>
<dbReference type="InterPro" id="IPR040190">
    <property type="entry name" value="MURQ/GCKR"/>
</dbReference>
<dbReference type="InterPro" id="IPR001347">
    <property type="entry name" value="SIS_dom"/>
</dbReference>
<dbReference type="InterPro" id="IPR046348">
    <property type="entry name" value="SIS_dom_sf"/>
</dbReference>
<dbReference type="NCBIfam" id="TIGR00274">
    <property type="entry name" value="N-acetylmuramic acid 6-phosphate etherase"/>
    <property type="match status" value="1"/>
</dbReference>
<dbReference type="NCBIfam" id="NF003915">
    <property type="entry name" value="PRK05441.1"/>
    <property type="match status" value="1"/>
</dbReference>
<dbReference type="NCBIfam" id="NF009222">
    <property type="entry name" value="PRK12570.1"/>
    <property type="match status" value="1"/>
</dbReference>
<dbReference type="PANTHER" id="PTHR10088">
    <property type="entry name" value="GLUCOKINASE REGULATORY PROTEIN"/>
    <property type="match status" value="1"/>
</dbReference>
<dbReference type="PANTHER" id="PTHR10088:SF4">
    <property type="entry name" value="GLUCOKINASE REGULATORY PROTEIN"/>
    <property type="match status" value="1"/>
</dbReference>
<dbReference type="Pfam" id="PF22645">
    <property type="entry name" value="GKRP_SIS_N"/>
    <property type="match status" value="1"/>
</dbReference>
<dbReference type="SUPFAM" id="SSF53697">
    <property type="entry name" value="SIS domain"/>
    <property type="match status" value="1"/>
</dbReference>
<dbReference type="PROSITE" id="PS01272">
    <property type="entry name" value="GCKR"/>
    <property type="match status" value="1"/>
</dbReference>
<dbReference type="PROSITE" id="PS51464">
    <property type="entry name" value="SIS"/>
    <property type="match status" value="1"/>
</dbReference>
<feature type="chain" id="PRO_1000009122" description="N-acetylmuramic acid 6-phosphate etherase">
    <location>
        <begin position="1"/>
        <end position="297"/>
    </location>
</feature>
<feature type="domain" description="SIS" evidence="1">
    <location>
        <begin position="56"/>
        <end position="219"/>
    </location>
</feature>
<feature type="active site" description="Proton donor" evidence="1">
    <location>
        <position position="84"/>
    </location>
</feature>
<feature type="active site" evidence="1">
    <location>
        <position position="115"/>
    </location>
</feature>
<protein>
    <recommendedName>
        <fullName evidence="1">N-acetylmuramic acid 6-phosphate etherase</fullName>
        <shortName evidence="1">MurNAc-6-P etherase</shortName>
        <ecNumber evidence="1">4.2.1.126</ecNumber>
    </recommendedName>
    <alternativeName>
        <fullName evidence="1">N-acetylmuramic acid 6-phosphate hydrolase</fullName>
    </alternativeName>
    <alternativeName>
        <fullName evidence="1">N-acetylmuramic acid 6-phosphate lyase</fullName>
    </alternativeName>
</protein>
<sequence length="297" mass="31998">MIDLSTLTTERRNDETFNLDQMTVKEALVKMNNEDKKVAYAVEEALPNIEPVISSAIEAFNKGGRLIYMGAGTSGRLGVLDAAECVPTFGVPATQVVGLIAGGDKAMTVAVEGAEDSLELGRQDLIDLNLSENDLVLGIAASGRTPYVIGALDYAKEIGAKRASLSCNLNAEISKHAEFPIEVDCGPEFLTGSTRLKSGTAQKLILNMISTISMIGIGKVYNNLMVDVKPTNEKLVERSKRIIMQATDCTYEEAEEKFNEANQDVKLAIVMLLTDCAAEEGKTKLVKANGFVKNTLN</sequence>
<keyword id="KW-0119">Carbohydrate metabolism</keyword>
<keyword id="KW-0456">Lyase</keyword>
<gene>
    <name evidence="1" type="primary">murQ</name>
    <name type="ordered locus">llmg_1427</name>
</gene>
<name>MURQ_LACLM</name>
<organism>
    <name type="scientific">Lactococcus lactis subsp. cremoris (strain MG1363)</name>
    <dbReference type="NCBI Taxonomy" id="416870"/>
    <lineage>
        <taxon>Bacteria</taxon>
        <taxon>Bacillati</taxon>
        <taxon>Bacillota</taxon>
        <taxon>Bacilli</taxon>
        <taxon>Lactobacillales</taxon>
        <taxon>Streptococcaceae</taxon>
        <taxon>Lactococcus</taxon>
        <taxon>Lactococcus cremoris subsp. cremoris</taxon>
    </lineage>
</organism>
<accession>A2RL43</accession>
<comment type="function">
    <text evidence="1">Specifically catalyzes the cleavage of the D-lactyl ether substituent of MurNAc 6-phosphate, producing GlcNAc 6-phosphate and D-lactate.</text>
</comment>
<comment type="catalytic activity">
    <reaction evidence="1">
        <text>N-acetyl-D-muramate 6-phosphate + H2O = N-acetyl-D-glucosamine 6-phosphate + (R)-lactate</text>
        <dbReference type="Rhea" id="RHEA:26410"/>
        <dbReference type="ChEBI" id="CHEBI:15377"/>
        <dbReference type="ChEBI" id="CHEBI:16004"/>
        <dbReference type="ChEBI" id="CHEBI:57513"/>
        <dbReference type="ChEBI" id="CHEBI:58722"/>
        <dbReference type="EC" id="4.2.1.126"/>
    </reaction>
</comment>
<comment type="pathway">
    <text evidence="1">Amino-sugar metabolism; N-acetylmuramate degradation.</text>
</comment>
<comment type="subunit">
    <text evidence="1">Homodimer.</text>
</comment>
<comment type="miscellaneous">
    <text evidence="1">A lyase-type mechanism (elimination/hydration) is suggested for the cleavage of the lactyl ether bond of MurNAc 6-phosphate, with the formation of an alpha,beta-unsaturated aldehyde intermediate with (E)-stereochemistry, followed by the syn addition of water to give product.</text>
</comment>
<comment type="similarity">
    <text evidence="1">Belongs to the GCKR-like family. MurNAc-6-P etherase subfamily.</text>
</comment>
<proteinExistence type="inferred from homology"/>
<evidence type="ECO:0000255" key="1">
    <source>
        <dbReference type="HAMAP-Rule" id="MF_00068"/>
    </source>
</evidence>